<evidence type="ECO:0000269" key="1">
    <source>
    </source>
</evidence>
<evidence type="ECO:0000305" key="2"/>
<evidence type="ECO:0000312" key="3">
    <source>
        <dbReference type="HGNC" id="HGNC:51263"/>
    </source>
</evidence>
<keyword id="KW-0539">Nucleus</keyword>
<keyword id="KW-1267">Proteomics identification</keyword>
<keyword id="KW-1185">Reference proteome</keyword>
<dbReference type="EMBL" id="AK292207">
    <property type="protein sequence ID" value="BAF84896.1"/>
    <property type="molecule type" value="mRNA"/>
</dbReference>
<dbReference type="EMBL" id="AC240441">
    <property type="status" value="NOT_ANNOTATED_CDS"/>
    <property type="molecule type" value="Genomic_DNA"/>
</dbReference>
<dbReference type="EMBL" id="BC070138">
    <property type="protein sequence ID" value="AAH70138.1"/>
    <property type="molecule type" value="mRNA"/>
</dbReference>
<dbReference type="EMBL" id="BC144429">
    <property type="protein sequence ID" value="AAI44430.1"/>
    <property type="molecule type" value="mRNA"/>
</dbReference>
<dbReference type="EMBL" id="BC144430">
    <property type="protein sequence ID" value="AAI44431.1"/>
    <property type="molecule type" value="mRNA"/>
</dbReference>
<dbReference type="EMBL" id="BC144527">
    <property type="protein sequence ID" value="AAI44528.1"/>
    <property type="molecule type" value="mRNA"/>
</dbReference>
<dbReference type="EMBL" id="BC144528">
    <property type="protein sequence ID" value="AAI44529.1"/>
    <property type="molecule type" value="mRNA"/>
</dbReference>
<dbReference type="CCDS" id="CCDS76035.1"/>
<dbReference type="RefSeq" id="NP_001278456.1">
    <property type="nucleotide sequence ID" value="NM_001291527.2"/>
</dbReference>
<dbReference type="RefSeq" id="NP_001278457.1">
    <property type="nucleotide sequence ID" value="NM_001291528.2"/>
</dbReference>
<dbReference type="RefSeq" id="NP_001278458.1">
    <property type="nucleotide sequence ID" value="NM_001291529.2"/>
</dbReference>
<dbReference type="RefSeq" id="NP_001278459.1">
    <property type="nucleotide sequence ID" value="NM_001291530.2"/>
</dbReference>
<dbReference type="RefSeq" id="NP_001372148.1">
    <property type="nucleotide sequence ID" value="NM_001385219.1"/>
</dbReference>
<dbReference type="RefSeq" id="NP_001372149.1">
    <property type="nucleotide sequence ID" value="NM_001385220.1"/>
</dbReference>
<dbReference type="RefSeq" id="XP_011529540.1">
    <property type="nucleotide sequence ID" value="XM_011531238.2"/>
</dbReference>
<dbReference type="RefSeq" id="XP_011529541.1">
    <property type="nucleotide sequence ID" value="XM_011531239.1"/>
</dbReference>
<dbReference type="SMR" id="P0DMU9"/>
<dbReference type="FunCoup" id="P0DMU9">
    <property type="interactions" value="2"/>
</dbReference>
<dbReference type="IntAct" id="P0DMU9">
    <property type="interactions" value="4"/>
</dbReference>
<dbReference type="STRING" id="9606.ENSP00000484601"/>
<dbReference type="GlyGen" id="P0DMU9">
    <property type="glycosylation" value="1 site, 1 O-linked glycan (1 site)"/>
</dbReference>
<dbReference type="iPTMnet" id="P0DMU9"/>
<dbReference type="PhosphoSitePlus" id="P0DMU9"/>
<dbReference type="BioMuta" id="CT45A10"/>
<dbReference type="jPOST" id="P0DMU9"/>
<dbReference type="MassIVE" id="P0DMU9"/>
<dbReference type="PaxDb" id="9606-ENSP00000484601"/>
<dbReference type="PeptideAtlas" id="P0DMU9"/>
<dbReference type="Pumba" id="P0DMU9"/>
<dbReference type="Antibodypedia" id="75747">
    <property type="antibodies" value="1 antibodies from 1 providers"/>
</dbReference>
<dbReference type="DNASU" id="102723631"/>
<dbReference type="Ensembl" id="ENST00000611668.4">
    <property type="protein sequence ID" value="ENSP00000484601.1"/>
    <property type="gene ID" value="ENSG00000269586.8"/>
</dbReference>
<dbReference type="Ensembl" id="ENST00000617981.1">
    <property type="protein sequence ID" value="ENSP00000481558.1"/>
    <property type="gene ID" value="ENSG00000269586.8"/>
</dbReference>
<dbReference type="Ensembl" id="ENST00000682849.1">
    <property type="protein sequence ID" value="ENSP00000507965.1"/>
    <property type="gene ID" value="ENSG00000269586.8"/>
</dbReference>
<dbReference type="GeneID" id="102723631"/>
<dbReference type="KEGG" id="hsa:102723631"/>
<dbReference type="MANE-Select" id="ENST00000682849.1">
    <property type="protein sequence ID" value="ENSP00000507965.1"/>
    <property type="RefSeq nucleotide sequence ID" value="NM_001291529.2"/>
    <property type="RefSeq protein sequence ID" value="NP_001278458.1"/>
</dbReference>
<dbReference type="AGR" id="HGNC:51263"/>
<dbReference type="CTD" id="102723631"/>
<dbReference type="GeneCards" id="CT45A10"/>
<dbReference type="HGNC" id="HGNC:51263">
    <property type="gene designation" value="CT45A10"/>
</dbReference>
<dbReference type="HPA" id="ENSG00000269586">
    <property type="expression patterns" value="Tissue enriched (testis)"/>
</dbReference>
<dbReference type="neXtProt" id="NX_P0DMU9"/>
<dbReference type="OpenTargets" id="ENSG00000269586"/>
<dbReference type="VEuPathDB" id="HostDB:ENSG00000269586"/>
<dbReference type="eggNOG" id="KOG3768">
    <property type="taxonomic scope" value="Eukaryota"/>
</dbReference>
<dbReference type="GeneTree" id="ENSGT00390000016655"/>
<dbReference type="InParanoid" id="P0DMU9"/>
<dbReference type="OMA" id="IHDIYVE"/>
<dbReference type="OrthoDB" id="9520782at2759"/>
<dbReference type="PAN-GO" id="P0DMU9">
    <property type="GO annotations" value="2 GO annotations based on evolutionary models"/>
</dbReference>
<dbReference type="PhylomeDB" id="P0DMU9"/>
<dbReference type="PathwayCommons" id="P0DMU9"/>
<dbReference type="SignaLink" id="P0DMU9"/>
<dbReference type="BioGRID-ORCS" id="102723631">
    <property type="hits" value="4 hits in 135 CRISPR screens"/>
</dbReference>
<dbReference type="GenomeRNAi" id="102723631"/>
<dbReference type="Pharos" id="P0DMU9">
    <property type="development level" value="Tdark"/>
</dbReference>
<dbReference type="PRO" id="PR:P0DMU9"/>
<dbReference type="Proteomes" id="UP000005640">
    <property type="component" value="Chromosome X"/>
</dbReference>
<dbReference type="RNAct" id="P0DMU9">
    <property type="molecule type" value="protein"/>
</dbReference>
<dbReference type="Bgee" id="ENSG00000269586">
    <property type="expression patterns" value="Expressed in primordial germ cell in gonad and 48 other cell types or tissues"/>
</dbReference>
<dbReference type="GO" id="GO:0005634">
    <property type="term" value="C:nucleus"/>
    <property type="evidence" value="ECO:0000314"/>
    <property type="project" value="UniProtKB"/>
</dbReference>
<dbReference type="GO" id="GO:0042802">
    <property type="term" value="F:identical protein binding"/>
    <property type="evidence" value="ECO:0000353"/>
    <property type="project" value="IntAct"/>
</dbReference>
<dbReference type="InterPro" id="IPR029307">
    <property type="entry name" value="INT_SG_DDX_CT_C"/>
</dbReference>
<dbReference type="InterPro" id="IPR051113">
    <property type="entry name" value="Integrator_subunit6"/>
</dbReference>
<dbReference type="PANTHER" id="PTHR12957">
    <property type="entry name" value="DEAD/H BOX POLYPEPTIDE 26/DICE1-RELATED"/>
    <property type="match status" value="1"/>
</dbReference>
<dbReference type="PANTHER" id="PTHR12957:SF2">
    <property type="entry name" value="INTEGRATOR COMPLEX SUBUNIT 6"/>
    <property type="match status" value="1"/>
</dbReference>
<dbReference type="Pfam" id="PF15300">
    <property type="entry name" value="INT_SG_DDX_CT_C"/>
    <property type="match status" value="1"/>
</dbReference>
<feature type="chain" id="PRO_0000433032" description="Cancer/testis antigen family 45 member A10">
    <location>
        <begin position="1"/>
        <end position="189"/>
    </location>
</feature>
<protein>
    <recommendedName>
        <fullName evidence="3">Cancer/testis antigen family 45 member A10</fullName>
    </recommendedName>
    <alternativeName>
        <fullName evidence="2">Cancer/testis antigen 45A10</fullName>
    </alternativeName>
</protein>
<gene>
    <name evidence="3" type="primary">CT45A10</name>
</gene>
<accession>P0DMU9</accession>
<accession>A8K842</accession>
<accession>B7ZMC5</accession>
<accession>Q6NSH3</accession>
<comment type="interaction">
    <interactant intactId="EBI-12153495">
        <id>P0DMU9</id>
    </interactant>
    <interactant intactId="EBI-12051833">
        <id>Q5HYN5</id>
        <label>CT45A1</label>
    </interactant>
    <organismsDiffer>false</organismsDiffer>
    <experiments>3</experiments>
</comment>
<comment type="interaction">
    <interactant intactId="EBI-12153495">
        <id>P0DMU9</id>
    </interactant>
    <interactant intactId="EBI-12153495">
        <id>P0DMU9</id>
        <label>CT45A10</label>
    </interactant>
    <organismsDiffer>false</organismsDiffer>
    <experiments>3</experiments>
</comment>
<comment type="interaction">
    <interactant intactId="EBI-12153495">
        <id>P0DMU9</id>
    </interactant>
    <interactant intactId="EBI-739789">
        <id>Q92997</id>
        <label>DVL3</label>
    </interactant>
    <organismsDiffer>false</organismsDiffer>
    <experiments>3</experiments>
</comment>
<comment type="interaction">
    <interactant intactId="EBI-12153495">
        <id>P0DMU9</id>
    </interactant>
    <interactant intactId="EBI-727004">
        <id>O00560</id>
        <label>SDCBP</label>
    </interactant>
    <organismsDiffer>false</organismsDiffer>
    <experiments>6</experiments>
</comment>
<comment type="interaction">
    <interactant intactId="EBI-12153495">
        <id>P0DMU9</id>
    </interactant>
    <interactant intactId="EBI-742426">
        <id>Q9H190</id>
        <label>SDCBP2</label>
    </interactant>
    <organismsDiffer>false</organismsDiffer>
    <experiments>3</experiments>
</comment>
<comment type="subcellular location">
    <subcellularLocation>
        <location evidence="1">Nucleus</location>
    </subcellularLocation>
</comment>
<comment type="similarity">
    <text>Belongs to the CT45 family.</text>
</comment>
<proteinExistence type="evidence at protein level"/>
<sequence>MTDKTEKVAVDPETVFKRPRECDSPSYQKRQRMALLARKQGAGDSLIAGSAMSKEKKLMTGHAIPPSQLDSQIDDFTGFSKDGMMQKPGSNAPVGGNVTSNFSGDDLECRGIASSPKSQQEINADIKCQVVKEIRCLGRKYEKIFEMLEGVQGPTAVRKRFFESIIKEAARCMRRDFVKHLKKKLKRMI</sequence>
<organism>
    <name type="scientific">Homo sapiens</name>
    <name type="common">Human</name>
    <dbReference type="NCBI Taxonomy" id="9606"/>
    <lineage>
        <taxon>Eukaryota</taxon>
        <taxon>Metazoa</taxon>
        <taxon>Chordata</taxon>
        <taxon>Craniata</taxon>
        <taxon>Vertebrata</taxon>
        <taxon>Euteleostomi</taxon>
        <taxon>Mammalia</taxon>
        <taxon>Eutheria</taxon>
        <taxon>Euarchontoglires</taxon>
        <taxon>Primates</taxon>
        <taxon>Haplorrhini</taxon>
        <taxon>Catarrhini</taxon>
        <taxon>Hominidae</taxon>
        <taxon>Homo</taxon>
    </lineage>
</organism>
<reference key="1">
    <citation type="journal article" date="2004" name="Nat. Genet.">
        <title>Complete sequencing and characterization of 21,243 full-length human cDNAs.</title>
        <authorList>
            <person name="Ota T."/>
            <person name="Suzuki Y."/>
            <person name="Nishikawa T."/>
            <person name="Otsuki T."/>
            <person name="Sugiyama T."/>
            <person name="Irie R."/>
            <person name="Wakamatsu A."/>
            <person name="Hayashi K."/>
            <person name="Sato H."/>
            <person name="Nagai K."/>
            <person name="Kimura K."/>
            <person name="Makita H."/>
            <person name="Sekine M."/>
            <person name="Obayashi M."/>
            <person name="Nishi T."/>
            <person name="Shibahara T."/>
            <person name="Tanaka T."/>
            <person name="Ishii S."/>
            <person name="Yamamoto J."/>
            <person name="Saito K."/>
            <person name="Kawai Y."/>
            <person name="Isono Y."/>
            <person name="Nakamura Y."/>
            <person name="Nagahari K."/>
            <person name="Murakami K."/>
            <person name="Yasuda T."/>
            <person name="Iwayanagi T."/>
            <person name="Wagatsuma M."/>
            <person name="Shiratori A."/>
            <person name="Sudo H."/>
            <person name="Hosoiri T."/>
            <person name="Kaku Y."/>
            <person name="Kodaira H."/>
            <person name="Kondo H."/>
            <person name="Sugawara M."/>
            <person name="Takahashi M."/>
            <person name="Kanda K."/>
            <person name="Yokoi T."/>
            <person name="Furuya T."/>
            <person name="Kikkawa E."/>
            <person name="Omura Y."/>
            <person name="Abe K."/>
            <person name="Kamihara K."/>
            <person name="Katsuta N."/>
            <person name="Sato K."/>
            <person name="Tanikawa M."/>
            <person name="Yamazaki M."/>
            <person name="Ninomiya K."/>
            <person name="Ishibashi T."/>
            <person name="Yamashita H."/>
            <person name="Murakawa K."/>
            <person name="Fujimori K."/>
            <person name="Tanai H."/>
            <person name="Kimata M."/>
            <person name="Watanabe M."/>
            <person name="Hiraoka S."/>
            <person name="Chiba Y."/>
            <person name="Ishida S."/>
            <person name="Ono Y."/>
            <person name="Takiguchi S."/>
            <person name="Watanabe S."/>
            <person name="Yosida M."/>
            <person name="Hotuta T."/>
            <person name="Kusano J."/>
            <person name="Kanehori K."/>
            <person name="Takahashi-Fujii A."/>
            <person name="Hara H."/>
            <person name="Tanase T.-O."/>
            <person name="Nomura Y."/>
            <person name="Togiya S."/>
            <person name="Komai F."/>
            <person name="Hara R."/>
            <person name="Takeuchi K."/>
            <person name="Arita M."/>
            <person name="Imose N."/>
            <person name="Musashino K."/>
            <person name="Yuuki H."/>
            <person name="Oshima A."/>
            <person name="Sasaki N."/>
            <person name="Aotsuka S."/>
            <person name="Yoshikawa Y."/>
            <person name="Matsunawa H."/>
            <person name="Ichihara T."/>
            <person name="Shiohata N."/>
            <person name="Sano S."/>
            <person name="Moriya S."/>
            <person name="Momiyama H."/>
            <person name="Satoh N."/>
            <person name="Takami S."/>
            <person name="Terashima Y."/>
            <person name="Suzuki O."/>
            <person name="Nakagawa S."/>
            <person name="Senoh A."/>
            <person name="Mizoguchi H."/>
            <person name="Goto Y."/>
            <person name="Shimizu F."/>
            <person name="Wakebe H."/>
            <person name="Hishigaki H."/>
            <person name="Watanabe T."/>
            <person name="Sugiyama A."/>
            <person name="Takemoto M."/>
            <person name="Kawakami B."/>
            <person name="Yamazaki M."/>
            <person name="Watanabe K."/>
            <person name="Kumagai A."/>
            <person name="Itakura S."/>
            <person name="Fukuzumi Y."/>
            <person name="Fujimori Y."/>
            <person name="Komiyama M."/>
            <person name="Tashiro H."/>
            <person name="Tanigami A."/>
            <person name="Fujiwara T."/>
            <person name="Ono T."/>
            <person name="Yamada K."/>
            <person name="Fujii Y."/>
            <person name="Ozaki K."/>
            <person name="Hirao M."/>
            <person name="Ohmori Y."/>
            <person name="Kawabata A."/>
            <person name="Hikiji T."/>
            <person name="Kobatake N."/>
            <person name="Inagaki H."/>
            <person name="Ikema Y."/>
            <person name="Okamoto S."/>
            <person name="Okitani R."/>
            <person name="Kawakami T."/>
            <person name="Noguchi S."/>
            <person name="Itoh T."/>
            <person name="Shigeta K."/>
            <person name="Senba T."/>
            <person name="Matsumura K."/>
            <person name="Nakajima Y."/>
            <person name="Mizuno T."/>
            <person name="Morinaga M."/>
            <person name="Sasaki M."/>
            <person name="Togashi T."/>
            <person name="Oyama M."/>
            <person name="Hata H."/>
            <person name="Watanabe M."/>
            <person name="Komatsu T."/>
            <person name="Mizushima-Sugano J."/>
            <person name="Satoh T."/>
            <person name="Shirai Y."/>
            <person name="Takahashi Y."/>
            <person name="Nakagawa K."/>
            <person name="Okumura K."/>
            <person name="Nagase T."/>
            <person name="Nomura N."/>
            <person name="Kikuchi H."/>
            <person name="Masuho Y."/>
            <person name="Yamashita R."/>
            <person name="Nakai K."/>
            <person name="Yada T."/>
            <person name="Nakamura Y."/>
            <person name="Ohara O."/>
            <person name="Isogai T."/>
            <person name="Sugano S."/>
        </authorList>
    </citation>
    <scope>NUCLEOTIDE SEQUENCE [LARGE SCALE MRNA]</scope>
</reference>
<reference key="2">
    <citation type="journal article" date="2005" name="Nature">
        <title>The DNA sequence of the human X chromosome.</title>
        <authorList>
            <person name="Ross M.T."/>
            <person name="Grafham D.V."/>
            <person name="Coffey A.J."/>
            <person name="Scherer S."/>
            <person name="McLay K."/>
            <person name="Muzny D."/>
            <person name="Platzer M."/>
            <person name="Howell G.R."/>
            <person name="Burrows C."/>
            <person name="Bird C.P."/>
            <person name="Frankish A."/>
            <person name="Lovell F.L."/>
            <person name="Howe K.L."/>
            <person name="Ashurst J.L."/>
            <person name="Fulton R.S."/>
            <person name="Sudbrak R."/>
            <person name="Wen G."/>
            <person name="Jones M.C."/>
            <person name="Hurles M.E."/>
            <person name="Andrews T.D."/>
            <person name="Scott C.E."/>
            <person name="Searle S."/>
            <person name="Ramser J."/>
            <person name="Whittaker A."/>
            <person name="Deadman R."/>
            <person name="Carter N.P."/>
            <person name="Hunt S.E."/>
            <person name="Chen R."/>
            <person name="Cree A."/>
            <person name="Gunaratne P."/>
            <person name="Havlak P."/>
            <person name="Hodgson A."/>
            <person name="Metzker M.L."/>
            <person name="Richards S."/>
            <person name="Scott G."/>
            <person name="Steffen D."/>
            <person name="Sodergren E."/>
            <person name="Wheeler D.A."/>
            <person name="Worley K.C."/>
            <person name="Ainscough R."/>
            <person name="Ambrose K.D."/>
            <person name="Ansari-Lari M.A."/>
            <person name="Aradhya S."/>
            <person name="Ashwell R.I."/>
            <person name="Babbage A.K."/>
            <person name="Bagguley C.L."/>
            <person name="Ballabio A."/>
            <person name="Banerjee R."/>
            <person name="Barker G.E."/>
            <person name="Barlow K.F."/>
            <person name="Barrett I.P."/>
            <person name="Bates K.N."/>
            <person name="Beare D.M."/>
            <person name="Beasley H."/>
            <person name="Beasley O."/>
            <person name="Beck A."/>
            <person name="Bethel G."/>
            <person name="Blechschmidt K."/>
            <person name="Brady N."/>
            <person name="Bray-Allen S."/>
            <person name="Bridgeman A.M."/>
            <person name="Brown A.J."/>
            <person name="Brown M.J."/>
            <person name="Bonnin D."/>
            <person name="Bruford E.A."/>
            <person name="Buhay C."/>
            <person name="Burch P."/>
            <person name="Burford D."/>
            <person name="Burgess J."/>
            <person name="Burrill W."/>
            <person name="Burton J."/>
            <person name="Bye J.M."/>
            <person name="Carder C."/>
            <person name="Carrel L."/>
            <person name="Chako J."/>
            <person name="Chapman J.C."/>
            <person name="Chavez D."/>
            <person name="Chen E."/>
            <person name="Chen G."/>
            <person name="Chen Y."/>
            <person name="Chen Z."/>
            <person name="Chinault C."/>
            <person name="Ciccodicola A."/>
            <person name="Clark S.Y."/>
            <person name="Clarke G."/>
            <person name="Clee C.M."/>
            <person name="Clegg S."/>
            <person name="Clerc-Blankenburg K."/>
            <person name="Clifford K."/>
            <person name="Cobley V."/>
            <person name="Cole C.G."/>
            <person name="Conquer J.S."/>
            <person name="Corby N."/>
            <person name="Connor R.E."/>
            <person name="David R."/>
            <person name="Davies J."/>
            <person name="Davis C."/>
            <person name="Davis J."/>
            <person name="Delgado O."/>
            <person name="Deshazo D."/>
            <person name="Dhami P."/>
            <person name="Ding Y."/>
            <person name="Dinh H."/>
            <person name="Dodsworth S."/>
            <person name="Draper H."/>
            <person name="Dugan-Rocha S."/>
            <person name="Dunham A."/>
            <person name="Dunn M."/>
            <person name="Durbin K.J."/>
            <person name="Dutta I."/>
            <person name="Eades T."/>
            <person name="Ellwood M."/>
            <person name="Emery-Cohen A."/>
            <person name="Errington H."/>
            <person name="Evans K.L."/>
            <person name="Faulkner L."/>
            <person name="Francis F."/>
            <person name="Frankland J."/>
            <person name="Fraser A.E."/>
            <person name="Galgoczy P."/>
            <person name="Gilbert J."/>
            <person name="Gill R."/>
            <person name="Gloeckner G."/>
            <person name="Gregory S.G."/>
            <person name="Gribble S."/>
            <person name="Griffiths C."/>
            <person name="Grocock R."/>
            <person name="Gu Y."/>
            <person name="Gwilliam R."/>
            <person name="Hamilton C."/>
            <person name="Hart E.A."/>
            <person name="Hawes A."/>
            <person name="Heath P.D."/>
            <person name="Heitmann K."/>
            <person name="Hennig S."/>
            <person name="Hernandez J."/>
            <person name="Hinzmann B."/>
            <person name="Ho S."/>
            <person name="Hoffs M."/>
            <person name="Howden P.J."/>
            <person name="Huckle E.J."/>
            <person name="Hume J."/>
            <person name="Hunt P.J."/>
            <person name="Hunt A.R."/>
            <person name="Isherwood J."/>
            <person name="Jacob L."/>
            <person name="Johnson D."/>
            <person name="Jones S."/>
            <person name="de Jong P.J."/>
            <person name="Joseph S.S."/>
            <person name="Keenan S."/>
            <person name="Kelly S."/>
            <person name="Kershaw J.K."/>
            <person name="Khan Z."/>
            <person name="Kioschis P."/>
            <person name="Klages S."/>
            <person name="Knights A.J."/>
            <person name="Kosiura A."/>
            <person name="Kovar-Smith C."/>
            <person name="Laird G.K."/>
            <person name="Langford C."/>
            <person name="Lawlor S."/>
            <person name="Leversha M."/>
            <person name="Lewis L."/>
            <person name="Liu W."/>
            <person name="Lloyd C."/>
            <person name="Lloyd D.M."/>
            <person name="Loulseged H."/>
            <person name="Loveland J.E."/>
            <person name="Lovell J.D."/>
            <person name="Lozado R."/>
            <person name="Lu J."/>
            <person name="Lyne R."/>
            <person name="Ma J."/>
            <person name="Maheshwari M."/>
            <person name="Matthews L.H."/>
            <person name="McDowall J."/>
            <person name="McLaren S."/>
            <person name="McMurray A."/>
            <person name="Meidl P."/>
            <person name="Meitinger T."/>
            <person name="Milne S."/>
            <person name="Miner G."/>
            <person name="Mistry S.L."/>
            <person name="Morgan M."/>
            <person name="Morris S."/>
            <person name="Mueller I."/>
            <person name="Mullikin J.C."/>
            <person name="Nguyen N."/>
            <person name="Nordsiek G."/>
            <person name="Nyakatura G."/>
            <person name="O'dell C.N."/>
            <person name="Okwuonu G."/>
            <person name="Palmer S."/>
            <person name="Pandian R."/>
            <person name="Parker D."/>
            <person name="Parrish J."/>
            <person name="Pasternak S."/>
            <person name="Patel D."/>
            <person name="Pearce A.V."/>
            <person name="Pearson D.M."/>
            <person name="Pelan S.E."/>
            <person name="Perez L."/>
            <person name="Porter K.M."/>
            <person name="Ramsey Y."/>
            <person name="Reichwald K."/>
            <person name="Rhodes S."/>
            <person name="Ridler K.A."/>
            <person name="Schlessinger D."/>
            <person name="Schueler M.G."/>
            <person name="Sehra H.K."/>
            <person name="Shaw-Smith C."/>
            <person name="Shen H."/>
            <person name="Sheridan E.M."/>
            <person name="Shownkeen R."/>
            <person name="Skuce C.D."/>
            <person name="Smith M.L."/>
            <person name="Sotheran E.C."/>
            <person name="Steingruber H.E."/>
            <person name="Steward C.A."/>
            <person name="Storey R."/>
            <person name="Swann R.M."/>
            <person name="Swarbreck D."/>
            <person name="Tabor P.E."/>
            <person name="Taudien S."/>
            <person name="Taylor T."/>
            <person name="Teague B."/>
            <person name="Thomas K."/>
            <person name="Thorpe A."/>
            <person name="Timms K."/>
            <person name="Tracey A."/>
            <person name="Trevanion S."/>
            <person name="Tromans A.C."/>
            <person name="d'Urso M."/>
            <person name="Verduzco D."/>
            <person name="Villasana D."/>
            <person name="Waldron L."/>
            <person name="Wall M."/>
            <person name="Wang Q."/>
            <person name="Warren J."/>
            <person name="Warry G.L."/>
            <person name="Wei X."/>
            <person name="West A."/>
            <person name="Whitehead S.L."/>
            <person name="Whiteley M.N."/>
            <person name="Wilkinson J.E."/>
            <person name="Willey D.L."/>
            <person name="Williams G."/>
            <person name="Williams L."/>
            <person name="Williamson A."/>
            <person name="Williamson H."/>
            <person name="Wilming L."/>
            <person name="Woodmansey R.L."/>
            <person name="Wray P.W."/>
            <person name="Yen J."/>
            <person name="Zhang J."/>
            <person name="Zhou J."/>
            <person name="Zoghbi H."/>
            <person name="Zorilla S."/>
            <person name="Buck D."/>
            <person name="Reinhardt R."/>
            <person name="Poustka A."/>
            <person name="Rosenthal A."/>
            <person name="Lehrach H."/>
            <person name="Meindl A."/>
            <person name="Minx P.J."/>
            <person name="Hillier L.W."/>
            <person name="Willard H.F."/>
            <person name="Wilson R.K."/>
            <person name="Waterston R.H."/>
            <person name="Rice C.M."/>
            <person name="Vaudin M."/>
            <person name="Coulson A."/>
            <person name="Nelson D.L."/>
            <person name="Weinstock G."/>
            <person name="Sulston J.E."/>
            <person name="Durbin R.M."/>
            <person name="Hubbard T."/>
            <person name="Gibbs R.A."/>
            <person name="Beck S."/>
            <person name="Rogers J."/>
            <person name="Bentley D.R."/>
        </authorList>
    </citation>
    <scope>NUCLEOTIDE SEQUENCE [LARGE SCALE GENOMIC DNA]</scope>
</reference>
<reference key="3">
    <citation type="journal article" date="2004" name="Genome Res.">
        <title>The status, quality, and expansion of the NIH full-length cDNA project: the Mammalian Gene Collection (MGC).</title>
        <authorList>
            <consortium name="The MGC Project Team"/>
        </authorList>
    </citation>
    <scope>NUCLEOTIDE SEQUENCE [LARGE SCALE MRNA]</scope>
</reference>
<reference key="4">
    <citation type="journal article" date="2019" name="J. Proteome Res.">
        <title>Cell Type-Specific Expression of Testis Elevated Genes Based on Transcriptomics and Antibody-Based Proteomics.</title>
        <authorList>
            <person name="Pineau C."/>
            <person name="Hikmet F."/>
            <person name="Zhang C."/>
            <person name="Oksvold P."/>
            <person name="Chen S."/>
            <person name="Fagerberg L."/>
            <person name="Uhlen M."/>
            <person name="Lindskog C."/>
        </authorList>
    </citation>
    <scope>SUBCELLULAR LOCATION</scope>
</reference>
<name>CT45A_HUMAN</name>